<keyword id="KW-0002">3D-structure</keyword>
<keyword id="KW-0240">DNA-directed RNA polymerase</keyword>
<keyword id="KW-0548">Nucleotidyltransferase</keyword>
<keyword id="KW-1185">Reference proteome</keyword>
<keyword id="KW-0804">Transcription</keyword>
<keyword id="KW-0808">Transferase</keyword>
<feature type="chain" id="PRO_0000129001" description="DNA-directed RNA polymerase subunit omega">
    <location>
        <begin position="1"/>
        <end position="76"/>
    </location>
</feature>
<feature type="helix" evidence="4">
    <location>
        <begin position="11"/>
        <end position="21"/>
    </location>
</feature>
<feature type="helix" evidence="4">
    <location>
        <begin position="28"/>
        <end position="43"/>
    </location>
</feature>
<feature type="strand" evidence="3">
    <location>
        <begin position="51"/>
        <end position="53"/>
    </location>
</feature>
<feature type="helix" evidence="4">
    <location>
        <begin position="55"/>
        <end position="67"/>
    </location>
</feature>
<name>RPOZ_SYNY3</name>
<organism>
    <name type="scientific">Synechocystis sp. (strain ATCC 27184 / PCC 6803 / Kazusa)</name>
    <dbReference type="NCBI Taxonomy" id="1111708"/>
    <lineage>
        <taxon>Bacteria</taxon>
        <taxon>Bacillati</taxon>
        <taxon>Cyanobacteriota</taxon>
        <taxon>Cyanophyceae</taxon>
        <taxon>Synechococcales</taxon>
        <taxon>Merismopediaceae</taxon>
        <taxon>Synechocystis</taxon>
    </lineage>
</organism>
<dbReference type="EC" id="2.7.7.6"/>
<dbReference type="EMBL" id="BA000022">
    <property type="protein sequence ID" value="BAA18446.1"/>
    <property type="molecule type" value="Genomic_DNA"/>
</dbReference>
<dbReference type="PIR" id="S76187">
    <property type="entry name" value="S76187"/>
</dbReference>
<dbReference type="PDB" id="8GZG">
    <property type="method" value="EM"/>
    <property type="resolution" value="3.13 A"/>
    <property type="chains" value="E=1-76"/>
</dbReference>
<dbReference type="PDB" id="8GZH">
    <property type="method" value="EM"/>
    <property type="resolution" value="2.96 A"/>
    <property type="chains" value="E=1-76"/>
</dbReference>
<dbReference type="PDBsum" id="8GZG"/>
<dbReference type="PDBsum" id="8GZH"/>
<dbReference type="EMDB" id="EMD-34397"/>
<dbReference type="EMDB" id="EMD-34398"/>
<dbReference type="SMR" id="P74352"/>
<dbReference type="STRING" id="1148.gene:10499322"/>
<dbReference type="PaxDb" id="1148-1653533"/>
<dbReference type="EnsemblBacteria" id="BAA18446">
    <property type="protein sequence ID" value="BAA18446"/>
    <property type="gene ID" value="BAA18446"/>
</dbReference>
<dbReference type="KEGG" id="syn:ssl2982"/>
<dbReference type="eggNOG" id="ENOG5032RMS">
    <property type="taxonomic scope" value="Bacteria"/>
</dbReference>
<dbReference type="InParanoid" id="P74352"/>
<dbReference type="Proteomes" id="UP000001425">
    <property type="component" value="Chromosome"/>
</dbReference>
<dbReference type="GO" id="GO:0000428">
    <property type="term" value="C:DNA-directed RNA polymerase complex"/>
    <property type="evidence" value="ECO:0007669"/>
    <property type="project" value="UniProtKB-KW"/>
</dbReference>
<dbReference type="GO" id="GO:0003677">
    <property type="term" value="F:DNA binding"/>
    <property type="evidence" value="ECO:0007669"/>
    <property type="project" value="UniProtKB-UniRule"/>
</dbReference>
<dbReference type="GO" id="GO:0003899">
    <property type="term" value="F:DNA-directed RNA polymerase activity"/>
    <property type="evidence" value="ECO:0007669"/>
    <property type="project" value="UniProtKB-UniRule"/>
</dbReference>
<dbReference type="GO" id="GO:0006351">
    <property type="term" value="P:DNA-templated transcription"/>
    <property type="evidence" value="ECO:0007669"/>
    <property type="project" value="UniProtKB-UniRule"/>
</dbReference>
<dbReference type="HAMAP" id="MF_00366">
    <property type="entry name" value="RNApol_bact_RpoZ"/>
    <property type="match status" value="1"/>
</dbReference>
<dbReference type="InterPro" id="IPR003716">
    <property type="entry name" value="DNA-dir_RNA_pol_omega"/>
</dbReference>
<dbReference type="InterPro" id="IPR006110">
    <property type="entry name" value="Pol_omega/Rpo6/RPB6"/>
</dbReference>
<dbReference type="InterPro" id="IPR036161">
    <property type="entry name" value="RPB6/omega-like_sf"/>
</dbReference>
<dbReference type="NCBIfam" id="NF001574">
    <property type="entry name" value="PRK00392.2-5"/>
    <property type="match status" value="1"/>
</dbReference>
<dbReference type="Pfam" id="PF01192">
    <property type="entry name" value="RNA_pol_Rpb6"/>
    <property type="match status" value="1"/>
</dbReference>
<dbReference type="SUPFAM" id="SSF63562">
    <property type="entry name" value="RPB6/omega subunit-like"/>
    <property type="match status" value="1"/>
</dbReference>
<proteinExistence type="evidence at protein level"/>
<comment type="function">
    <text evidence="1">Promotes RNA polymerase assembly. Latches the N- and C-terminal regions of the beta' subunit thereby facilitating its interaction with the beta and alpha subunits (By similarity).</text>
</comment>
<comment type="catalytic activity">
    <reaction>
        <text>RNA(n) + a ribonucleoside 5'-triphosphate = RNA(n+1) + diphosphate</text>
        <dbReference type="Rhea" id="RHEA:21248"/>
        <dbReference type="Rhea" id="RHEA-COMP:14527"/>
        <dbReference type="Rhea" id="RHEA-COMP:17342"/>
        <dbReference type="ChEBI" id="CHEBI:33019"/>
        <dbReference type="ChEBI" id="CHEBI:61557"/>
        <dbReference type="ChEBI" id="CHEBI:140395"/>
        <dbReference type="EC" id="2.7.7.6"/>
    </reaction>
</comment>
<comment type="subunit">
    <text evidence="1">In cyanobacteria the RNAP catalytic core is composed of 2 alpha, 1 beta, 1 beta', 1 gamma and 1 omega subunit. When a sigma factor is associated with the core the holoenzyme is formed, which can initiate transcription (By similarity).</text>
</comment>
<comment type="similarity">
    <text evidence="2">Belongs to the RNA polymerase subunit omega family.</text>
</comment>
<evidence type="ECO:0000250" key="1"/>
<evidence type="ECO:0000305" key="2"/>
<evidence type="ECO:0007829" key="3">
    <source>
        <dbReference type="PDB" id="8GZG"/>
    </source>
</evidence>
<evidence type="ECO:0007829" key="4">
    <source>
        <dbReference type="PDB" id="8GZH"/>
    </source>
</evidence>
<sequence>MTKRSNLDSNHIIYRSEELLGAASNRYNITVRVAKRAKENRSEDFDSIDDPNMKPAIRAIIEMSDELTRPEIISDN</sequence>
<reference key="1">
    <citation type="journal article" date="1996" name="DNA Res.">
        <title>Sequence analysis of the genome of the unicellular cyanobacterium Synechocystis sp. strain PCC6803. II. Sequence determination of the entire genome and assignment of potential protein-coding regions.</title>
        <authorList>
            <person name="Kaneko T."/>
            <person name="Sato S."/>
            <person name="Kotani H."/>
            <person name="Tanaka A."/>
            <person name="Asamizu E."/>
            <person name="Nakamura Y."/>
            <person name="Miyajima N."/>
            <person name="Hirosawa M."/>
            <person name="Sugiura M."/>
            <person name="Sasamoto S."/>
            <person name="Kimura T."/>
            <person name="Hosouchi T."/>
            <person name="Matsuno A."/>
            <person name="Muraki A."/>
            <person name="Nakazaki N."/>
            <person name="Naruo K."/>
            <person name="Okumura S."/>
            <person name="Shimpo S."/>
            <person name="Takeuchi C."/>
            <person name="Wada T."/>
            <person name="Watanabe A."/>
            <person name="Yamada M."/>
            <person name="Yasuda M."/>
            <person name="Tabata S."/>
        </authorList>
    </citation>
    <scope>NUCLEOTIDE SEQUENCE [LARGE SCALE GENOMIC DNA]</scope>
    <source>
        <strain>ATCC 27184 / PCC 6803 / Kazusa</strain>
    </source>
</reference>
<gene>
    <name type="primary">rpoZ</name>
    <name type="ordered locus">ssl2982</name>
</gene>
<accession>P74352</accession>
<protein>
    <recommendedName>
        <fullName>DNA-directed RNA polymerase subunit omega</fullName>
        <shortName>RNAP omega subunit</shortName>
        <ecNumber>2.7.7.6</ecNumber>
    </recommendedName>
    <alternativeName>
        <fullName>RNA polymerase omega subunit</fullName>
    </alternativeName>
    <alternativeName>
        <fullName>Transcriptase subunit omega</fullName>
    </alternativeName>
</protein>